<accession>P82343</accession>
<accession>Q3TIZ6</accession>
<accession>Q3UJ23</accession>
<accession>Q80Z67</accession>
<accession>Q91WI9</accession>
<accession>Q9CXI1</accession>
<sequence length="419" mass="48510">MEKERETLQVWKKRVEQELDRVIAFWMEHSHDQEHGGFFTCLGRDGKVYDHLKYVWLQGRQVWMYCRLYRSFERFRRVELLDAARAGGEFLLRYARVAPPGKKCAFVLTRDGRPVKVQRTIFSECFYTMAMNELWKVTGEVRYQSEAIEMMDQIIHWVREDPAGLGRPQLSGALATEPMAVPMMLLSLVEQLGEEDEELTNMYAELGDWCVHRILQHVQRDGQVVLENVSEDGKELPGCLGRHQNPGHTLEAGWFLLQYALRKGDPKLRMHIIDKFLLLPFHSGWDPEHGGLFYFQDADGLCPTQLEWNMKLWWPHSEAMIAFLMGYSDSGDPALLHLFYKVAEYTFRQFRDPEYGEWFGYLNQEGKVALTIKGGPFKGCFHVPRCLAMCEQILGALLQRLEPAPLDSSPAVSTHEGSK</sequence>
<keyword id="KW-0025">Alternative splicing</keyword>
<keyword id="KW-0413">Isomerase</keyword>
<keyword id="KW-0597">Phosphoprotein</keyword>
<keyword id="KW-1185">Reference proteome</keyword>
<proteinExistence type="evidence at protein level"/>
<protein>
    <recommendedName>
        <fullName>N-acylglucosamine 2-epimerase</fullName>
        <shortName>AGE</shortName>
        <ecNumber evidence="2">5.1.3.8</ecNumber>
    </recommendedName>
    <alternativeName>
        <fullName>GlcNAc 2-epimerase</fullName>
    </alternativeName>
    <alternativeName>
        <fullName>N-acetyl-D-glucosamine 2-epimerase</fullName>
    </alternativeName>
    <alternativeName>
        <fullName>Renin-binding protein</fullName>
        <shortName>RnBP</shortName>
    </alternativeName>
</protein>
<gene>
    <name type="primary">Renbp</name>
</gene>
<organism>
    <name type="scientific">Mus musculus</name>
    <name type="common">Mouse</name>
    <dbReference type="NCBI Taxonomy" id="10090"/>
    <lineage>
        <taxon>Eukaryota</taxon>
        <taxon>Metazoa</taxon>
        <taxon>Chordata</taxon>
        <taxon>Craniata</taxon>
        <taxon>Vertebrata</taxon>
        <taxon>Euteleostomi</taxon>
        <taxon>Mammalia</taxon>
        <taxon>Eutheria</taxon>
        <taxon>Euarchontoglires</taxon>
        <taxon>Glires</taxon>
        <taxon>Rodentia</taxon>
        <taxon>Myomorpha</taxon>
        <taxon>Muroidea</taxon>
        <taxon>Muridae</taxon>
        <taxon>Murinae</taxon>
        <taxon>Mus</taxon>
        <taxon>Mus</taxon>
    </lineage>
</organism>
<evidence type="ECO:0000250" key="1">
    <source>
        <dbReference type="UniProtKB" id="P51606"/>
    </source>
</evidence>
<evidence type="ECO:0000269" key="2">
    <source>
    </source>
</evidence>
<evidence type="ECO:0000303" key="3">
    <source>
    </source>
</evidence>
<evidence type="ECO:0000303" key="4">
    <source>
    </source>
</evidence>
<evidence type="ECO:0000305" key="5"/>
<evidence type="ECO:0000305" key="6">
    <source>
    </source>
</evidence>
<evidence type="ECO:0007744" key="7">
    <source>
    </source>
</evidence>
<name>RENBP_MOUSE</name>
<reference key="1">
    <citation type="submission" date="1999-03" db="EMBL/GenBank/DDBJ databases">
        <title>Comparative sequence analysis of the mouse L1cam locus and the corresponding region of human Xq28.</title>
        <authorList>
            <person name="Platzer M."/>
            <person name="Brenner V."/>
            <person name="Reichwald K."/>
            <person name="Wiehe T."/>
            <person name="Oksche A."/>
            <person name="Rosenthal A."/>
        </authorList>
    </citation>
    <scope>NUCLEOTIDE SEQUENCE [GENOMIC DNA] (ISOFORM 1)</scope>
</reference>
<reference key="2">
    <citation type="submission" date="2002-11" db="EMBL/GenBank/DDBJ databases">
        <title>Transcript analysis of human and mouse orthologs.</title>
        <authorList>
            <person name="Reichwald K."/>
            <person name="Petz U."/>
            <person name="Rosenthal A."/>
            <person name="Platzer M."/>
        </authorList>
    </citation>
    <scope>NUCLEOTIDE SEQUENCE [MRNA] (ISOFORM 1)</scope>
    <source>
        <strain>BALB/cJ</strain>
    </source>
</reference>
<reference key="3">
    <citation type="journal article" date="2005" name="Science">
        <title>The transcriptional landscape of the mammalian genome.</title>
        <authorList>
            <person name="Carninci P."/>
            <person name="Kasukawa T."/>
            <person name="Katayama S."/>
            <person name="Gough J."/>
            <person name="Frith M.C."/>
            <person name="Maeda N."/>
            <person name="Oyama R."/>
            <person name="Ravasi T."/>
            <person name="Lenhard B."/>
            <person name="Wells C."/>
            <person name="Kodzius R."/>
            <person name="Shimokawa K."/>
            <person name="Bajic V.B."/>
            <person name="Brenner S.E."/>
            <person name="Batalov S."/>
            <person name="Forrest A.R."/>
            <person name="Zavolan M."/>
            <person name="Davis M.J."/>
            <person name="Wilming L.G."/>
            <person name="Aidinis V."/>
            <person name="Allen J.E."/>
            <person name="Ambesi-Impiombato A."/>
            <person name="Apweiler R."/>
            <person name="Aturaliya R.N."/>
            <person name="Bailey T.L."/>
            <person name="Bansal M."/>
            <person name="Baxter L."/>
            <person name="Beisel K.W."/>
            <person name="Bersano T."/>
            <person name="Bono H."/>
            <person name="Chalk A.M."/>
            <person name="Chiu K.P."/>
            <person name="Choudhary V."/>
            <person name="Christoffels A."/>
            <person name="Clutterbuck D.R."/>
            <person name="Crowe M.L."/>
            <person name="Dalla E."/>
            <person name="Dalrymple B.P."/>
            <person name="de Bono B."/>
            <person name="Della Gatta G."/>
            <person name="di Bernardo D."/>
            <person name="Down T."/>
            <person name="Engstrom P."/>
            <person name="Fagiolini M."/>
            <person name="Faulkner G."/>
            <person name="Fletcher C.F."/>
            <person name="Fukushima T."/>
            <person name="Furuno M."/>
            <person name="Futaki S."/>
            <person name="Gariboldi M."/>
            <person name="Georgii-Hemming P."/>
            <person name="Gingeras T.R."/>
            <person name="Gojobori T."/>
            <person name="Green R.E."/>
            <person name="Gustincich S."/>
            <person name="Harbers M."/>
            <person name="Hayashi Y."/>
            <person name="Hensch T.K."/>
            <person name="Hirokawa N."/>
            <person name="Hill D."/>
            <person name="Huminiecki L."/>
            <person name="Iacono M."/>
            <person name="Ikeo K."/>
            <person name="Iwama A."/>
            <person name="Ishikawa T."/>
            <person name="Jakt M."/>
            <person name="Kanapin A."/>
            <person name="Katoh M."/>
            <person name="Kawasawa Y."/>
            <person name="Kelso J."/>
            <person name="Kitamura H."/>
            <person name="Kitano H."/>
            <person name="Kollias G."/>
            <person name="Krishnan S.P."/>
            <person name="Kruger A."/>
            <person name="Kummerfeld S.K."/>
            <person name="Kurochkin I.V."/>
            <person name="Lareau L.F."/>
            <person name="Lazarevic D."/>
            <person name="Lipovich L."/>
            <person name="Liu J."/>
            <person name="Liuni S."/>
            <person name="McWilliam S."/>
            <person name="Madan Babu M."/>
            <person name="Madera M."/>
            <person name="Marchionni L."/>
            <person name="Matsuda H."/>
            <person name="Matsuzawa S."/>
            <person name="Miki H."/>
            <person name="Mignone F."/>
            <person name="Miyake S."/>
            <person name="Morris K."/>
            <person name="Mottagui-Tabar S."/>
            <person name="Mulder N."/>
            <person name="Nakano N."/>
            <person name="Nakauchi H."/>
            <person name="Ng P."/>
            <person name="Nilsson R."/>
            <person name="Nishiguchi S."/>
            <person name="Nishikawa S."/>
            <person name="Nori F."/>
            <person name="Ohara O."/>
            <person name="Okazaki Y."/>
            <person name="Orlando V."/>
            <person name="Pang K.C."/>
            <person name="Pavan W.J."/>
            <person name="Pavesi G."/>
            <person name="Pesole G."/>
            <person name="Petrovsky N."/>
            <person name="Piazza S."/>
            <person name="Reed J."/>
            <person name="Reid J.F."/>
            <person name="Ring B.Z."/>
            <person name="Ringwald M."/>
            <person name="Rost B."/>
            <person name="Ruan Y."/>
            <person name="Salzberg S.L."/>
            <person name="Sandelin A."/>
            <person name="Schneider C."/>
            <person name="Schoenbach C."/>
            <person name="Sekiguchi K."/>
            <person name="Semple C.A."/>
            <person name="Seno S."/>
            <person name="Sessa L."/>
            <person name="Sheng Y."/>
            <person name="Shibata Y."/>
            <person name="Shimada H."/>
            <person name="Shimada K."/>
            <person name="Silva D."/>
            <person name="Sinclair B."/>
            <person name="Sperling S."/>
            <person name="Stupka E."/>
            <person name="Sugiura K."/>
            <person name="Sultana R."/>
            <person name="Takenaka Y."/>
            <person name="Taki K."/>
            <person name="Tammoja K."/>
            <person name="Tan S.L."/>
            <person name="Tang S."/>
            <person name="Taylor M.S."/>
            <person name="Tegner J."/>
            <person name="Teichmann S.A."/>
            <person name="Ueda H.R."/>
            <person name="van Nimwegen E."/>
            <person name="Verardo R."/>
            <person name="Wei C.L."/>
            <person name="Yagi K."/>
            <person name="Yamanishi H."/>
            <person name="Zabarovsky E."/>
            <person name="Zhu S."/>
            <person name="Zimmer A."/>
            <person name="Hide W."/>
            <person name="Bult C."/>
            <person name="Grimmond S.M."/>
            <person name="Teasdale R.D."/>
            <person name="Liu E.T."/>
            <person name="Brusic V."/>
            <person name="Quackenbush J."/>
            <person name="Wahlestedt C."/>
            <person name="Mattick J.S."/>
            <person name="Hume D.A."/>
            <person name="Kai C."/>
            <person name="Sasaki D."/>
            <person name="Tomaru Y."/>
            <person name="Fukuda S."/>
            <person name="Kanamori-Katayama M."/>
            <person name="Suzuki M."/>
            <person name="Aoki J."/>
            <person name="Arakawa T."/>
            <person name="Iida J."/>
            <person name="Imamura K."/>
            <person name="Itoh M."/>
            <person name="Kato T."/>
            <person name="Kawaji H."/>
            <person name="Kawagashira N."/>
            <person name="Kawashima T."/>
            <person name="Kojima M."/>
            <person name="Kondo S."/>
            <person name="Konno H."/>
            <person name="Nakano K."/>
            <person name="Ninomiya N."/>
            <person name="Nishio T."/>
            <person name="Okada M."/>
            <person name="Plessy C."/>
            <person name="Shibata K."/>
            <person name="Shiraki T."/>
            <person name="Suzuki S."/>
            <person name="Tagami M."/>
            <person name="Waki K."/>
            <person name="Watahiki A."/>
            <person name="Okamura-Oho Y."/>
            <person name="Suzuki H."/>
            <person name="Kawai J."/>
            <person name="Hayashizaki Y."/>
        </authorList>
    </citation>
    <scope>NUCLEOTIDE SEQUENCE [LARGE SCALE MRNA] (ISOFORMS 1 AND 2)</scope>
    <source>
        <strain>C57BL/6J</strain>
        <tissue>Embryonic head</tissue>
        <tissue>Placenta</tissue>
        <tissue>Stomach</tissue>
    </source>
</reference>
<reference key="4">
    <citation type="journal article" date="2009" name="PLoS Biol.">
        <title>Lineage-specific biology revealed by a finished genome assembly of the mouse.</title>
        <authorList>
            <person name="Church D.M."/>
            <person name="Goodstadt L."/>
            <person name="Hillier L.W."/>
            <person name="Zody M.C."/>
            <person name="Goldstein S."/>
            <person name="She X."/>
            <person name="Bult C.J."/>
            <person name="Agarwala R."/>
            <person name="Cherry J.L."/>
            <person name="DiCuccio M."/>
            <person name="Hlavina W."/>
            <person name="Kapustin Y."/>
            <person name="Meric P."/>
            <person name="Maglott D."/>
            <person name="Birtle Z."/>
            <person name="Marques A.C."/>
            <person name="Graves T."/>
            <person name="Zhou S."/>
            <person name="Teague B."/>
            <person name="Potamousis K."/>
            <person name="Churas C."/>
            <person name="Place M."/>
            <person name="Herschleb J."/>
            <person name="Runnheim R."/>
            <person name="Forrest D."/>
            <person name="Amos-Landgraf J."/>
            <person name="Schwartz D.C."/>
            <person name="Cheng Z."/>
            <person name="Lindblad-Toh K."/>
            <person name="Eichler E.E."/>
            <person name="Ponting C.P."/>
        </authorList>
    </citation>
    <scope>NUCLEOTIDE SEQUENCE [LARGE SCALE GENOMIC DNA]</scope>
    <source>
        <strain>C57BL/6J</strain>
    </source>
</reference>
<reference key="5">
    <citation type="submission" date="2005-09" db="EMBL/GenBank/DDBJ databases">
        <authorList>
            <person name="Mural R.J."/>
            <person name="Adams M.D."/>
            <person name="Myers E.W."/>
            <person name="Smith H.O."/>
            <person name="Venter J.C."/>
        </authorList>
    </citation>
    <scope>NUCLEOTIDE SEQUENCE [LARGE SCALE GENOMIC DNA]</scope>
</reference>
<reference key="6">
    <citation type="journal article" date="2004" name="Genome Res.">
        <title>The status, quality, and expansion of the NIH full-length cDNA project: the Mammalian Gene Collection (MGC).</title>
        <authorList>
            <consortium name="The MGC Project Team"/>
        </authorList>
    </citation>
    <scope>NUCLEOTIDE SEQUENCE [LARGE SCALE MRNA] (ISOFORM 2)</scope>
    <source>
        <strain>FVB/N</strain>
        <tissue>Kidney</tissue>
    </source>
</reference>
<reference key="7">
    <citation type="journal article" date="2010" name="Cell">
        <title>A tissue-specific atlas of mouse protein phosphorylation and expression.</title>
        <authorList>
            <person name="Huttlin E.L."/>
            <person name="Jedrychowski M.P."/>
            <person name="Elias J.E."/>
            <person name="Goswami T."/>
            <person name="Rad R."/>
            <person name="Beausoleil S.A."/>
            <person name="Villen J."/>
            <person name="Haas W."/>
            <person name="Sowa M.E."/>
            <person name="Gygi S.P."/>
        </authorList>
    </citation>
    <scope>PHOSPHORYLATION [LARGE SCALE ANALYSIS] AT SER-418</scope>
    <scope>IDENTIFICATION BY MASS SPECTROMETRY [LARGE SCALE ANALYSIS]</scope>
    <source>
        <tissue>Kidney</tissue>
        <tissue>Lung</tissue>
        <tissue>Spleen</tissue>
    </source>
</reference>
<reference key="8">
    <citation type="journal article" date="2012" name="J. Biol. Chem.">
        <title>Metabolism of vertebrate amino sugars with N-glycolyl groups: elucidating the intracellular fate of the non-human sialic acid N-glycolylneuraminic acid.</title>
        <authorList>
            <person name="Bergfeld A.K."/>
            <person name="Pearce O.M."/>
            <person name="Diaz S.L."/>
            <person name="Pham T."/>
            <person name="Varki A."/>
        </authorList>
    </citation>
    <scope>FUNCTION</scope>
    <scope>CATALYTIC ACTIVITY</scope>
    <scope>PATHWAY</scope>
</reference>
<comment type="function">
    <text evidence="2">Catalyzes the interconversion of N-acetylglucosamine to N-acetylmannosamine (PubMed:22692205). Involved in the N-glycolylneuraminic acid (Neu5Gc) degradation pathway (PubMed:22692205).</text>
</comment>
<comment type="catalytic activity">
    <reaction evidence="2">
        <text>an N-acyl-D-glucosamine = an N-acyl-D-mannosamine</text>
        <dbReference type="Rhea" id="RHEA:19033"/>
        <dbReference type="ChEBI" id="CHEBI:16062"/>
        <dbReference type="ChEBI" id="CHEBI:17274"/>
        <dbReference type="EC" id="5.1.3.8"/>
    </reaction>
    <physiologicalReaction direction="left-to-right" evidence="1">
        <dbReference type="Rhea" id="RHEA:19034"/>
    </physiologicalReaction>
    <physiologicalReaction direction="right-to-left" evidence="6">
        <dbReference type="Rhea" id="RHEA:19035"/>
    </physiologicalReaction>
</comment>
<comment type="pathway">
    <text evidence="2">Amino-sugar metabolism; N-acetylneuraminate degradation.</text>
</comment>
<comment type="subunit">
    <text evidence="1">Homodimer. Forms a heterodimer with renin and inhibits its activity.</text>
</comment>
<comment type="alternative products">
    <event type="alternative splicing"/>
    <isoform>
        <id>P82343-1</id>
        <name>1</name>
        <sequence type="displayed"/>
    </isoform>
    <isoform>
        <id>P82343-2</id>
        <name>2</name>
        <sequence type="described" ref="VSP_039024"/>
    </isoform>
</comment>
<comment type="similarity">
    <text evidence="5">Belongs to the N-acylglucosamine 2-epimerase family.</text>
</comment>
<comment type="sequence caution" evidence="5">
    <conflict type="erroneous initiation">
        <sequence resource="EMBL-CDS" id="BAE27332"/>
    </conflict>
    <text>Extended N-terminus.</text>
</comment>
<comment type="sequence caution" evidence="5">
    <conflict type="erroneous initiation">
        <sequence resource="EMBL-CDS" id="BAE39699"/>
    </conflict>
    <text>Extended N-terminus.</text>
</comment>
<comment type="sequence caution" evidence="5">
    <conflict type="erroneous gene model prediction">
        <sequence resource="EMBL-CDS" id="EDL29852"/>
    </conflict>
</comment>
<comment type="sequence caution" evidence="5">
    <conflict type="erroneous gene model prediction">
        <sequence resource="EMBL-CDS" id="EDL29854"/>
    </conflict>
</comment>
<feature type="chain" id="PRO_0000208950" description="N-acylglucosamine 2-epimerase">
    <location>
        <begin position="1"/>
        <end position="419"/>
    </location>
</feature>
<feature type="region of interest" description="Leucine-zipper">
    <location>
        <begin position="185"/>
        <end position="206"/>
    </location>
</feature>
<feature type="site" description="Important for enzyme activity" evidence="1">
    <location>
        <position position="380"/>
    </location>
</feature>
<feature type="modified residue" description="Phosphoserine" evidence="7">
    <location>
        <position position="418"/>
    </location>
</feature>
<feature type="splice variant" id="VSP_039024" description="In isoform 2." evidence="3 4">
    <location>
        <begin position="48"/>
        <end position="61"/>
    </location>
</feature>
<feature type="sequence conflict" description="In Ref. 3; BAB29288." evidence="5" ref="3">
    <original>GR</original>
    <variation>AV</variation>
    <location>
        <begin position="166"/>
        <end position="167"/>
    </location>
</feature>
<dbReference type="EC" id="5.1.3.8" evidence="2"/>
<dbReference type="EMBL" id="AF133093">
    <property type="status" value="NOT_ANNOTATED_CDS"/>
    <property type="molecule type" value="Genomic_DNA"/>
</dbReference>
<dbReference type="EMBL" id="AY183138">
    <property type="protein sequence ID" value="AAO66340.1"/>
    <property type="molecule type" value="mRNA"/>
</dbReference>
<dbReference type="EMBL" id="AK014347">
    <property type="protein sequence ID" value="BAB29288.1"/>
    <property type="molecule type" value="mRNA"/>
</dbReference>
<dbReference type="EMBL" id="AK146652">
    <property type="protein sequence ID" value="BAE27332.1"/>
    <property type="status" value="ALT_INIT"/>
    <property type="molecule type" value="mRNA"/>
</dbReference>
<dbReference type="EMBL" id="AK167648">
    <property type="protein sequence ID" value="BAE39699.1"/>
    <property type="status" value="ALT_INIT"/>
    <property type="molecule type" value="mRNA"/>
</dbReference>
<dbReference type="EMBL" id="AL672002">
    <property type="status" value="NOT_ANNOTATED_CDS"/>
    <property type="molecule type" value="Genomic_DNA"/>
</dbReference>
<dbReference type="EMBL" id="CH466650">
    <property type="protein sequence ID" value="EDL29852.1"/>
    <property type="status" value="ALT_SEQ"/>
    <property type="molecule type" value="Genomic_DNA"/>
</dbReference>
<dbReference type="EMBL" id="CH466650">
    <property type="protein sequence ID" value="EDL29854.1"/>
    <property type="status" value="ALT_SEQ"/>
    <property type="molecule type" value="Genomic_DNA"/>
</dbReference>
<dbReference type="EMBL" id="BC014821">
    <property type="protein sequence ID" value="AAH14821.1"/>
    <property type="molecule type" value="mRNA"/>
</dbReference>
<dbReference type="RefSeq" id="NP_001158176.1">
    <property type="nucleotide sequence ID" value="NM_001164704.1"/>
</dbReference>
<dbReference type="RefSeq" id="NP_001412884.1">
    <molecule id="P82343-1"/>
    <property type="nucleotide sequence ID" value="NM_001425955.1"/>
</dbReference>
<dbReference type="RefSeq" id="NP_001412886.1">
    <molecule id="P82343-2"/>
    <property type="nucleotide sequence ID" value="NM_001425957.1"/>
</dbReference>
<dbReference type="RefSeq" id="NP_075621.3">
    <property type="nucleotide sequence ID" value="NM_023132.3"/>
</dbReference>
<dbReference type="SMR" id="P82343"/>
<dbReference type="BioGRID" id="202859">
    <property type="interactions" value="1"/>
</dbReference>
<dbReference type="FunCoup" id="P82343">
    <property type="interactions" value="55"/>
</dbReference>
<dbReference type="STRING" id="10090.ENSMUSP00000112277"/>
<dbReference type="GlyGen" id="P82343">
    <property type="glycosylation" value="1 site, 1 O-linked glycan (1 site)"/>
</dbReference>
<dbReference type="iPTMnet" id="P82343"/>
<dbReference type="PhosphoSitePlus" id="P82343"/>
<dbReference type="jPOST" id="P82343"/>
<dbReference type="PaxDb" id="10090-ENSMUSP00000112277"/>
<dbReference type="PeptideAtlas" id="P82343"/>
<dbReference type="ProteomicsDB" id="253254">
    <molecule id="P82343-1"/>
</dbReference>
<dbReference type="ProteomicsDB" id="253255">
    <molecule id="P82343-2"/>
</dbReference>
<dbReference type="Pumba" id="P82343"/>
<dbReference type="Antibodypedia" id="413">
    <property type="antibodies" value="119 antibodies from 16 providers"/>
</dbReference>
<dbReference type="DNASU" id="19703"/>
<dbReference type="Ensembl" id="ENSMUST00000155597.2">
    <molecule id="P82343-1"/>
    <property type="protein sequence ID" value="ENSMUSP00000116549.2"/>
    <property type="gene ID" value="ENSMUSG00000031387.15"/>
</dbReference>
<dbReference type="GeneID" id="19703"/>
<dbReference type="KEGG" id="mmu:19703"/>
<dbReference type="UCSC" id="uc009tnj.2">
    <molecule id="P82343-1"/>
    <property type="organism name" value="mouse"/>
</dbReference>
<dbReference type="UCSC" id="uc009tnk.2">
    <molecule id="P82343-2"/>
    <property type="organism name" value="mouse"/>
</dbReference>
<dbReference type="AGR" id="MGI:105940"/>
<dbReference type="CTD" id="5973"/>
<dbReference type="MGI" id="MGI:105940">
    <property type="gene designation" value="Renbp"/>
</dbReference>
<dbReference type="VEuPathDB" id="HostDB:ENSMUSG00000031387"/>
<dbReference type="eggNOG" id="ENOG502QSDA">
    <property type="taxonomic scope" value="Eukaryota"/>
</dbReference>
<dbReference type="GeneTree" id="ENSGT00390000013740"/>
<dbReference type="InParanoid" id="P82343"/>
<dbReference type="OrthoDB" id="414129at2759"/>
<dbReference type="PhylomeDB" id="P82343"/>
<dbReference type="TreeFam" id="TF329027"/>
<dbReference type="Reactome" id="R-MMU-446210">
    <property type="pathway name" value="Synthesis of UDP-N-acetyl-glucosamine"/>
</dbReference>
<dbReference type="UniPathway" id="UPA00629"/>
<dbReference type="BioGRID-ORCS" id="19703">
    <property type="hits" value="0 hits in 76 CRISPR screens"/>
</dbReference>
<dbReference type="ChiTaRS" id="Renbp">
    <property type="organism name" value="mouse"/>
</dbReference>
<dbReference type="PRO" id="PR:P82343"/>
<dbReference type="Proteomes" id="UP000000589">
    <property type="component" value="Chromosome X"/>
</dbReference>
<dbReference type="RNAct" id="P82343">
    <property type="molecule type" value="protein"/>
</dbReference>
<dbReference type="Bgee" id="ENSMUSG00000031387">
    <property type="expression patterns" value="Expressed in blastoderm cell in morula and 198 other cell types or tissues"/>
</dbReference>
<dbReference type="ExpressionAtlas" id="P82343">
    <property type="expression patterns" value="baseline and differential"/>
</dbReference>
<dbReference type="GO" id="GO:0042802">
    <property type="term" value="F:identical protein binding"/>
    <property type="evidence" value="ECO:0000250"/>
    <property type="project" value="UniProtKB"/>
</dbReference>
<dbReference type="GO" id="GO:0050121">
    <property type="term" value="F:N-acylglucosamine 2-epimerase activity"/>
    <property type="evidence" value="ECO:0000314"/>
    <property type="project" value="UniProtKB"/>
</dbReference>
<dbReference type="GO" id="GO:0030414">
    <property type="term" value="F:peptidase inhibitor activity"/>
    <property type="evidence" value="ECO:0000250"/>
    <property type="project" value="UniProtKB"/>
</dbReference>
<dbReference type="GO" id="GO:0005975">
    <property type="term" value="P:carbohydrate metabolic process"/>
    <property type="evidence" value="ECO:0007669"/>
    <property type="project" value="InterPro"/>
</dbReference>
<dbReference type="GO" id="GO:0006044">
    <property type="term" value="P:N-acetylglucosamine metabolic process"/>
    <property type="evidence" value="ECO:0000315"/>
    <property type="project" value="MGI"/>
</dbReference>
<dbReference type="GO" id="GO:0019262">
    <property type="term" value="P:N-acetylneuraminate catabolic process"/>
    <property type="evidence" value="ECO:0000304"/>
    <property type="project" value="UniProtKB"/>
</dbReference>
<dbReference type="CDD" id="cd00249">
    <property type="entry name" value="AGE"/>
    <property type="match status" value="1"/>
</dbReference>
<dbReference type="FunFam" id="1.50.10.10:FF:000021">
    <property type="entry name" value="N-acylglucosamine 2-epimerase"/>
    <property type="match status" value="1"/>
</dbReference>
<dbReference type="Gene3D" id="1.50.10.10">
    <property type="match status" value="1"/>
</dbReference>
<dbReference type="InterPro" id="IPR008928">
    <property type="entry name" value="6-hairpin_glycosidase_sf"/>
</dbReference>
<dbReference type="InterPro" id="IPR012341">
    <property type="entry name" value="6hp_glycosidase-like_sf"/>
</dbReference>
<dbReference type="InterPro" id="IPR010819">
    <property type="entry name" value="AGE/CE"/>
</dbReference>
<dbReference type="InterPro" id="IPR034116">
    <property type="entry name" value="AGE_dom"/>
</dbReference>
<dbReference type="PANTHER" id="PTHR15108">
    <property type="entry name" value="N-ACYLGLUCOSAMINE-2-EPIMERASE"/>
    <property type="match status" value="1"/>
</dbReference>
<dbReference type="Pfam" id="PF07221">
    <property type="entry name" value="GlcNAc_2-epim"/>
    <property type="match status" value="1"/>
</dbReference>
<dbReference type="SUPFAM" id="SSF48208">
    <property type="entry name" value="Six-hairpin glycosidases"/>
    <property type="match status" value="1"/>
</dbReference>